<accession>Q640V2</accession>
<name>RMD5A_XENTR</name>
<sequence>MDQCGTVERELEKVLHKFGGYGQHCERSLEELMEYAGGLRREILQAAEQDGELSGTLSLVLTQCCKRIKDTVQKLASDHKDIHSSVSRVGKAIDKNFDADISSVGIDGCWQNDSQQILSEVMVEHFFRQGMLDVAEELCQEAGLSIDASQKEPFVELNRILEALKVRVLRPALEWAVSNREMLMAQNSSLEFKLHRLYFISLLMGGTVNQREALQYAKNFQPFAENHQKDIQVLMGSLVYLRQGIENSPYVHLLDANQWADICDIFTRDACALLGLSVESPLSVSFSAGCVALPALINIKAVIEQRQCTGVWNQKDELPIEVDLGKKCWYHSIFACPILRQQTTDNNPPMKLVCGHIISRDALNKMFNGSKLKCPYCPMEQSPGDAKQIFF</sequence>
<protein>
    <recommendedName>
        <fullName>E3 ubiquitin-protein ligase RMND5A</fullName>
        <ecNumber evidence="1">2.3.2.27</ecNumber>
    </recommendedName>
    <alternativeName>
        <fullName>Protein RMD5 homolog A</fullName>
    </alternativeName>
</protein>
<gene>
    <name type="primary">rmnd5a</name>
    <name type="ORF">TGas140j12.1</name>
</gene>
<keyword id="KW-0963">Cytoplasm</keyword>
<keyword id="KW-0479">Metal-binding</keyword>
<keyword id="KW-0539">Nucleus</keyword>
<keyword id="KW-1185">Reference proteome</keyword>
<keyword id="KW-0808">Transferase</keyword>
<keyword id="KW-0833">Ubl conjugation pathway</keyword>
<keyword id="KW-0862">Zinc</keyword>
<keyword id="KW-0863">Zinc-finger</keyword>
<organism>
    <name type="scientific">Xenopus tropicalis</name>
    <name type="common">Western clawed frog</name>
    <name type="synonym">Silurana tropicalis</name>
    <dbReference type="NCBI Taxonomy" id="8364"/>
    <lineage>
        <taxon>Eukaryota</taxon>
        <taxon>Metazoa</taxon>
        <taxon>Chordata</taxon>
        <taxon>Craniata</taxon>
        <taxon>Vertebrata</taxon>
        <taxon>Euteleostomi</taxon>
        <taxon>Amphibia</taxon>
        <taxon>Batrachia</taxon>
        <taxon>Anura</taxon>
        <taxon>Pipoidea</taxon>
        <taxon>Pipidae</taxon>
        <taxon>Xenopodinae</taxon>
        <taxon>Xenopus</taxon>
        <taxon>Silurana</taxon>
    </lineage>
</organism>
<proteinExistence type="evidence at transcript level"/>
<reference key="1">
    <citation type="submission" date="2006-10" db="EMBL/GenBank/DDBJ databases">
        <authorList>
            <consortium name="Sanger Xenopus tropicalis EST/cDNA project"/>
        </authorList>
    </citation>
    <scope>NUCLEOTIDE SEQUENCE [LARGE SCALE MRNA]</scope>
    <source>
        <tissue>Gastrula</tissue>
    </source>
</reference>
<reference key="2">
    <citation type="submission" date="2004-09" db="EMBL/GenBank/DDBJ databases">
        <authorList>
            <consortium name="NIH - Xenopus Gene Collection (XGC) project"/>
        </authorList>
    </citation>
    <scope>NUCLEOTIDE SEQUENCE [LARGE SCALE MRNA]</scope>
    <source>
        <tissue>Embryo</tissue>
    </source>
</reference>
<feature type="chain" id="PRO_0000272651" description="E3 ubiquitin-protein ligase RMND5A">
    <location>
        <begin position="1"/>
        <end position="391"/>
    </location>
</feature>
<feature type="domain" description="LisH" evidence="4">
    <location>
        <begin position="114"/>
        <end position="146"/>
    </location>
</feature>
<feature type="domain" description="CTLH" evidence="3">
    <location>
        <begin position="153"/>
        <end position="210"/>
    </location>
</feature>
<feature type="zinc finger region" description="RING-Gid-type" evidence="5">
    <location>
        <begin position="336"/>
        <end position="377"/>
    </location>
</feature>
<comment type="function">
    <text evidence="1">E3 ubiquitin-protein ligase component of the CTLH complex.</text>
</comment>
<comment type="catalytic activity">
    <reaction evidence="1">
        <text>S-ubiquitinyl-[E2 ubiquitin-conjugating enzyme]-L-cysteine + [acceptor protein]-L-lysine = [E2 ubiquitin-conjugating enzyme]-L-cysteine + N(6)-ubiquitinyl-[acceptor protein]-L-lysine.</text>
        <dbReference type="EC" id="2.3.2.27"/>
    </reaction>
</comment>
<comment type="subunit">
    <text evidence="2">Identified in the CTLH complex that contains at least RANBP9, MKLN1, MAEA, RMND5A, GID8 and ARMC8.</text>
</comment>
<comment type="subcellular location">
    <subcellularLocation>
        <location evidence="2">Nucleus</location>
        <location evidence="2">Nucleoplasm</location>
    </subcellularLocation>
    <subcellularLocation>
        <location evidence="2">Cytoplasm</location>
    </subcellularLocation>
</comment>
<evidence type="ECO:0000250" key="1">
    <source>
        <dbReference type="UniProtKB" id="Q6GLP4"/>
    </source>
</evidence>
<evidence type="ECO:0000250" key="2">
    <source>
        <dbReference type="UniProtKB" id="Q9H871"/>
    </source>
</evidence>
<evidence type="ECO:0000255" key="3">
    <source>
        <dbReference type="PROSITE-ProRule" id="PRU00058"/>
    </source>
</evidence>
<evidence type="ECO:0000255" key="4">
    <source>
        <dbReference type="PROSITE-ProRule" id="PRU00126"/>
    </source>
</evidence>
<evidence type="ECO:0000255" key="5">
    <source>
        <dbReference type="PROSITE-ProRule" id="PRU01215"/>
    </source>
</evidence>
<dbReference type="EC" id="2.3.2.27" evidence="1"/>
<dbReference type="EMBL" id="CR855626">
    <property type="protein sequence ID" value="CAJ82582.1"/>
    <property type="molecule type" value="mRNA"/>
</dbReference>
<dbReference type="EMBL" id="BC082487">
    <property type="protein sequence ID" value="AAH82487.1"/>
    <property type="molecule type" value="mRNA"/>
</dbReference>
<dbReference type="RefSeq" id="NP_001008169.1">
    <property type="nucleotide sequence ID" value="NM_001008168.1"/>
</dbReference>
<dbReference type="SMR" id="Q640V2"/>
<dbReference type="FunCoup" id="Q640V2">
    <property type="interactions" value="1869"/>
</dbReference>
<dbReference type="STRING" id="8364.ENSXETP00000000652"/>
<dbReference type="PaxDb" id="8364-ENSXETP00000004081"/>
<dbReference type="DNASU" id="493531"/>
<dbReference type="GeneID" id="493531"/>
<dbReference type="KEGG" id="xtr:493531"/>
<dbReference type="AGR" id="Xenbase:XB-GENE-5741891"/>
<dbReference type="CTD" id="64795"/>
<dbReference type="Xenbase" id="XB-GENE-5741891">
    <property type="gene designation" value="rmnd5a"/>
</dbReference>
<dbReference type="eggNOG" id="KOG2817">
    <property type="taxonomic scope" value="Eukaryota"/>
</dbReference>
<dbReference type="InParanoid" id="Q640V2"/>
<dbReference type="OMA" id="LIRECKM"/>
<dbReference type="OrthoDB" id="1933281at2759"/>
<dbReference type="Reactome" id="R-XTR-9861718">
    <property type="pathway name" value="Regulation of pyruvate metabolism"/>
</dbReference>
<dbReference type="Proteomes" id="UP000008143">
    <property type="component" value="Chromosome 1"/>
</dbReference>
<dbReference type="GO" id="GO:0005737">
    <property type="term" value="C:cytoplasm"/>
    <property type="evidence" value="ECO:0000250"/>
    <property type="project" value="UniProtKB"/>
</dbReference>
<dbReference type="GO" id="GO:0005654">
    <property type="term" value="C:nucleoplasm"/>
    <property type="evidence" value="ECO:0007669"/>
    <property type="project" value="UniProtKB-SubCell"/>
</dbReference>
<dbReference type="GO" id="GO:0005634">
    <property type="term" value="C:nucleus"/>
    <property type="evidence" value="ECO:0000250"/>
    <property type="project" value="UniProtKB"/>
</dbReference>
<dbReference type="GO" id="GO:0000151">
    <property type="term" value="C:ubiquitin ligase complex"/>
    <property type="evidence" value="ECO:0000250"/>
    <property type="project" value="UniProtKB"/>
</dbReference>
<dbReference type="GO" id="GO:0061630">
    <property type="term" value="F:ubiquitin protein ligase activity"/>
    <property type="evidence" value="ECO:0007669"/>
    <property type="project" value="InterPro"/>
</dbReference>
<dbReference type="GO" id="GO:0004842">
    <property type="term" value="F:ubiquitin-protein transferase activity"/>
    <property type="evidence" value="ECO:0000250"/>
    <property type="project" value="UniProtKB"/>
</dbReference>
<dbReference type="GO" id="GO:0008270">
    <property type="term" value="F:zinc ion binding"/>
    <property type="evidence" value="ECO:0007669"/>
    <property type="project" value="UniProtKB-KW"/>
</dbReference>
<dbReference type="GO" id="GO:0043161">
    <property type="term" value="P:proteasome-mediated ubiquitin-dependent protein catabolic process"/>
    <property type="evidence" value="ECO:0007669"/>
    <property type="project" value="InterPro"/>
</dbReference>
<dbReference type="GO" id="GO:0000209">
    <property type="term" value="P:protein polyubiquitination"/>
    <property type="evidence" value="ECO:0000250"/>
    <property type="project" value="UniProtKB"/>
</dbReference>
<dbReference type="CDD" id="cd16794">
    <property type="entry name" value="dRING_RMD5A"/>
    <property type="match status" value="1"/>
</dbReference>
<dbReference type="FunFam" id="3.30.40.10:FF:000143">
    <property type="entry name" value="Regulator of gluconeogenesis Rmd5"/>
    <property type="match status" value="1"/>
</dbReference>
<dbReference type="InterPro" id="IPR013144">
    <property type="entry name" value="CRA_dom"/>
</dbReference>
<dbReference type="InterPro" id="IPR024964">
    <property type="entry name" value="CTLH/CRA"/>
</dbReference>
<dbReference type="InterPro" id="IPR006595">
    <property type="entry name" value="CTLH_C"/>
</dbReference>
<dbReference type="InterPro" id="IPR045098">
    <property type="entry name" value="Fyv10_fam"/>
</dbReference>
<dbReference type="InterPro" id="IPR006594">
    <property type="entry name" value="LisH"/>
</dbReference>
<dbReference type="InterPro" id="IPR037680">
    <property type="entry name" value="RMD5A_dRING"/>
</dbReference>
<dbReference type="InterPro" id="IPR044063">
    <property type="entry name" value="ZF_RING_GID"/>
</dbReference>
<dbReference type="InterPro" id="IPR027370">
    <property type="entry name" value="Znf-RING_euk"/>
</dbReference>
<dbReference type="PANTHER" id="PTHR12170:SF5">
    <property type="entry name" value="E3 UBIQUITIN-PROTEIN TRANSFERASE RMND5A"/>
    <property type="match status" value="1"/>
</dbReference>
<dbReference type="PANTHER" id="PTHR12170">
    <property type="entry name" value="MACROPHAGE ERYTHROBLAST ATTACHER-RELATED"/>
    <property type="match status" value="1"/>
</dbReference>
<dbReference type="Pfam" id="PF10607">
    <property type="entry name" value="CTLH"/>
    <property type="match status" value="1"/>
</dbReference>
<dbReference type="Pfam" id="PF13445">
    <property type="entry name" value="zf-RING_UBOX"/>
    <property type="match status" value="1"/>
</dbReference>
<dbReference type="SMART" id="SM00757">
    <property type="entry name" value="CRA"/>
    <property type="match status" value="1"/>
</dbReference>
<dbReference type="SMART" id="SM00668">
    <property type="entry name" value="CTLH"/>
    <property type="match status" value="1"/>
</dbReference>
<dbReference type="SMART" id="SM00667">
    <property type="entry name" value="LisH"/>
    <property type="match status" value="1"/>
</dbReference>
<dbReference type="SUPFAM" id="SSF57850">
    <property type="entry name" value="RING/U-box"/>
    <property type="match status" value="1"/>
</dbReference>
<dbReference type="PROSITE" id="PS50897">
    <property type="entry name" value="CTLH"/>
    <property type="match status" value="1"/>
</dbReference>
<dbReference type="PROSITE" id="PS50896">
    <property type="entry name" value="LISH"/>
    <property type="match status" value="1"/>
</dbReference>
<dbReference type="PROSITE" id="PS51867">
    <property type="entry name" value="ZF_RING_GID"/>
    <property type="match status" value="1"/>
</dbReference>